<dbReference type="EMBL" id="CP000655">
    <property type="protein sequence ID" value="ABP34050.1"/>
    <property type="molecule type" value="Genomic_DNA"/>
</dbReference>
<dbReference type="RefSeq" id="WP_011902675.1">
    <property type="nucleotide sequence ID" value="NC_009379.1"/>
</dbReference>
<dbReference type="SMR" id="A4SX36"/>
<dbReference type="GeneID" id="31481194"/>
<dbReference type="KEGG" id="pnu:Pnuc_0832"/>
<dbReference type="eggNOG" id="COG0292">
    <property type="taxonomic scope" value="Bacteria"/>
</dbReference>
<dbReference type="HOGENOM" id="CLU_123265_0_1_4"/>
<dbReference type="Proteomes" id="UP000000231">
    <property type="component" value="Chromosome"/>
</dbReference>
<dbReference type="GO" id="GO:1990904">
    <property type="term" value="C:ribonucleoprotein complex"/>
    <property type="evidence" value="ECO:0007669"/>
    <property type="project" value="UniProtKB-KW"/>
</dbReference>
<dbReference type="GO" id="GO:0005840">
    <property type="term" value="C:ribosome"/>
    <property type="evidence" value="ECO:0007669"/>
    <property type="project" value="UniProtKB-KW"/>
</dbReference>
<dbReference type="GO" id="GO:0019843">
    <property type="term" value="F:rRNA binding"/>
    <property type="evidence" value="ECO:0007669"/>
    <property type="project" value="UniProtKB-UniRule"/>
</dbReference>
<dbReference type="GO" id="GO:0003735">
    <property type="term" value="F:structural constituent of ribosome"/>
    <property type="evidence" value="ECO:0007669"/>
    <property type="project" value="InterPro"/>
</dbReference>
<dbReference type="GO" id="GO:0000027">
    <property type="term" value="P:ribosomal large subunit assembly"/>
    <property type="evidence" value="ECO:0007669"/>
    <property type="project" value="UniProtKB-UniRule"/>
</dbReference>
<dbReference type="GO" id="GO:0006412">
    <property type="term" value="P:translation"/>
    <property type="evidence" value="ECO:0007669"/>
    <property type="project" value="InterPro"/>
</dbReference>
<dbReference type="CDD" id="cd07026">
    <property type="entry name" value="Ribosomal_L20"/>
    <property type="match status" value="1"/>
</dbReference>
<dbReference type="FunFam" id="1.10.1900.20:FF:000001">
    <property type="entry name" value="50S ribosomal protein L20"/>
    <property type="match status" value="1"/>
</dbReference>
<dbReference type="Gene3D" id="6.10.160.10">
    <property type="match status" value="1"/>
</dbReference>
<dbReference type="Gene3D" id="1.10.1900.20">
    <property type="entry name" value="Ribosomal protein L20"/>
    <property type="match status" value="1"/>
</dbReference>
<dbReference type="HAMAP" id="MF_00382">
    <property type="entry name" value="Ribosomal_bL20"/>
    <property type="match status" value="1"/>
</dbReference>
<dbReference type="InterPro" id="IPR005813">
    <property type="entry name" value="Ribosomal_bL20"/>
</dbReference>
<dbReference type="InterPro" id="IPR049946">
    <property type="entry name" value="RIBOSOMAL_L20_CS"/>
</dbReference>
<dbReference type="InterPro" id="IPR035566">
    <property type="entry name" value="Ribosomal_protein_bL20_C"/>
</dbReference>
<dbReference type="NCBIfam" id="TIGR01032">
    <property type="entry name" value="rplT_bact"/>
    <property type="match status" value="1"/>
</dbReference>
<dbReference type="PANTHER" id="PTHR10986">
    <property type="entry name" value="39S RIBOSOMAL PROTEIN L20"/>
    <property type="match status" value="1"/>
</dbReference>
<dbReference type="Pfam" id="PF00453">
    <property type="entry name" value="Ribosomal_L20"/>
    <property type="match status" value="1"/>
</dbReference>
<dbReference type="PRINTS" id="PR00062">
    <property type="entry name" value="RIBOSOMALL20"/>
</dbReference>
<dbReference type="SUPFAM" id="SSF74731">
    <property type="entry name" value="Ribosomal protein L20"/>
    <property type="match status" value="1"/>
</dbReference>
<dbReference type="PROSITE" id="PS00937">
    <property type="entry name" value="RIBOSOMAL_L20"/>
    <property type="match status" value="1"/>
</dbReference>
<sequence>MPRVKRGVTARARHKKITDAATGYRGRRKNVFRIAKQAVMRAGQYAYRDRRNKKRVFRALWIARINAAVRQHDMTYSVFMNGMKKAAIELDRKVLSDMAIADKAAFAALVTRIKSVVNAAA</sequence>
<protein>
    <recommendedName>
        <fullName evidence="1">Large ribosomal subunit protein bL20</fullName>
    </recommendedName>
    <alternativeName>
        <fullName evidence="2">50S ribosomal protein L20</fullName>
    </alternativeName>
</protein>
<feature type="chain" id="PRO_1000080084" description="Large ribosomal subunit protein bL20">
    <location>
        <begin position="1"/>
        <end position="121"/>
    </location>
</feature>
<keyword id="KW-1185">Reference proteome</keyword>
<keyword id="KW-0687">Ribonucleoprotein</keyword>
<keyword id="KW-0689">Ribosomal protein</keyword>
<keyword id="KW-0694">RNA-binding</keyword>
<keyword id="KW-0699">rRNA-binding</keyword>
<reference key="1">
    <citation type="journal article" date="2012" name="Stand. Genomic Sci.">
        <title>Complete genome sequence of Polynucleobacter necessarius subsp. asymbioticus type strain (QLW-P1DMWA-1(T)).</title>
        <authorList>
            <person name="Meincke L."/>
            <person name="Copeland A."/>
            <person name="Lapidus A."/>
            <person name="Lucas S."/>
            <person name="Berry K.W."/>
            <person name="Del Rio T.G."/>
            <person name="Hammon N."/>
            <person name="Dalin E."/>
            <person name="Tice H."/>
            <person name="Pitluck S."/>
            <person name="Richardson P."/>
            <person name="Bruce D."/>
            <person name="Goodwin L."/>
            <person name="Han C."/>
            <person name="Tapia R."/>
            <person name="Detter J.C."/>
            <person name="Schmutz J."/>
            <person name="Brettin T."/>
            <person name="Larimer F."/>
            <person name="Land M."/>
            <person name="Hauser L."/>
            <person name="Kyrpides N.C."/>
            <person name="Ivanova N."/>
            <person name="Goker M."/>
            <person name="Woyke T."/>
            <person name="Wu Q.L."/>
            <person name="Pockl M."/>
            <person name="Hahn M.W."/>
            <person name="Klenk H.P."/>
        </authorList>
    </citation>
    <scope>NUCLEOTIDE SEQUENCE [LARGE SCALE GENOMIC DNA]</scope>
    <source>
        <strain>DSM 18221 / CIP 109841 / QLW-P1DMWA-1</strain>
    </source>
</reference>
<proteinExistence type="inferred from homology"/>
<gene>
    <name evidence="1" type="primary">rplT</name>
    <name type="ordered locus">Pnuc_0832</name>
</gene>
<name>RL20_POLAQ</name>
<evidence type="ECO:0000255" key="1">
    <source>
        <dbReference type="HAMAP-Rule" id="MF_00382"/>
    </source>
</evidence>
<evidence type="ECO:0000305" key="2"/>
<comment type="function">
    <text evidence="1">Binds directly to 23S ribosomal RNA and is necessary for the in vitro assembly process of the 50S ribosomal subunit. It is not involved in the protein synthesizing functions of that subunit.</text>
</comment>
<comment type="similarity">
    <text evidence="1">Belongs to the bacterial ribosomal protein bL20 family.</text>
</comment>
<accession>A4SX36</accession>
<organism>
    <name type="scientific">Polynucleobacter asymbioticus (strain DSM 18221 / CIP 109841 / QLW-P1DMWA-1)</name>
    <name type="common">Polynucleobacter necessarius subsp. asymbioticus</name>
    <dbReference type="NCBI Taxonomy" id="312153"/>
    <lineage>
        <taxon>Bacteria</taxon>
        <taxon>Pseudomonadati</taxon>
        <taxon>Pseudomonadota</taxon>
        <taxon>Betaproteobacteria</taxon>
        <taxon>Burkholderiales</taxon>
        <taxon>Burkholderiaceae</taxon>
        <taxon>Polynucleobacter</taxon>
    </lineage>
</organism>